<organism>
    <name type="scientific">Guizotia abyssinica</name>
    <name type="common">Niger</name>
    <name type="synonym">Ramtilla</name>
    <dbReference type="NCBI Taxonomy" id="4230"/>
    <lineage>
        <taxon>Eukaryota</taxon>
        <taxon>Viridiplantae</taxon>
        <taxon>Streptophyta</taxon>
        <taxon>Embryophyta</taxon>
        <taxon>Tracheophyta</taxon>
        <taxon>Spermatophyta</taxon>
        <taxon>Magnoliopsida</taxon>
        <taxon>eudicotyledons</taxon>
        <taxon>Gunneridae</taxon>
        <taxon>Pentapetalae</taxon>
        <taxon>asterids</taxon>
        <taxon>campanulids</taxon>
        <taxon>Asterales</taxon>
        <taxon>Asteraceae</taxon>
        <taxon>Asteroideae</taxon>
        <taxon>Heliantheae alliance</taxon>
        <taxon>Millerieae</taxon>
        <taxon>Guizotia</taxon>
    </lineage>
</organism>
<sequence>MDLPGLIHDFLLVFLGLGLILGGLGVVLLANPIYSAFSLGLVFVCISLFYILANSHFVAAAQLLIYVGAINVLIIFAVMFINGSEYSKDFHLWTVGDGVTSVVCTSLFVSLITTIPDTSWYGIIWTTKANQIIEQDLISNSQQIGIHLSTDFFLPFEFISIILLVALIGAIAVARQ</sequence>
<dbReference type="EC" id="7.1.1.-"/>
<dbReference type="EMBL" id="EU549769">
    <property type="protein sequence ID" value="ACB86578.1"/>
    <property type="molecule type" value="Genomic_DNA"/>
</dbReference>
<dbReference type="RefSeq" id="YP_001837412.1">
    <property type="nucleotide sequence ID" value="NC_010601.1"/>
</dbReference>
<dbReference type="SMR" id="B2LMP5"/>
<dbReference type="GeneID" id="6219201"/>
<dbReference type="GO" id="GO:0009535">
    <property type="term" value="C:chloroplast thylakoid membrane"/>
    <property type="evidence" value="ECO:0007669"/>
    <property type="project" value="UniProtKB-SubCell"/>
</dbReference>
<dbReference type="GO" id="GO:0008137">
    <property type="term" value="F:NADH dehydrogenase (ubiquinone) activity"/>
    <property type="evidence" value="ECO:0007669"/>
    <property type="project" value="InterPro"/>
</dbReference>
<dbReference type="GO" id="GO:0048038">
    <property type="term" value="F:quinone binding"/>
    <property type="evidence" value="ECO:0007669"/>
    <property type="project" value="UniProtKB-KW"/>
</dbReference>
<dbReference type="FunFam" id="1.20.120.1200:FF:000002">
    <property type="entry name" value="NAD(P)H-quinone oxidoreductase subunit 6, chloroplastic"/>
    <property type="match status" value="1"/>
</dbReference>
<dbReference type="Gene3D" id="1.20.120.1200">
    <property type="entry name" value="NADH-ubiquinone/plastoquinone oxidoreductase chain 6, subunit NuoJ"/>
    <property type="match status" value="1"/>
</dbReference>
<dbReference type="InterPro" id="IPR050290">
    <property type="entry name" value="NAD(P)H-Q_Oxidoreduct_6"/>
</dbReference>
<dbReference type="InterPro" id="IPR001457">
    <property type="entry name" value="NADH_UbQ/plastoQ_OxRdtase_su6"/>
</dbReference>
<dbReference type="InterPro" id="IPR042106">
    <property type="entry name" value="Nuo/plastoQ_OxRdtase_6_NuoJ"/>
</dbReference>
<dbReference type="PANTHER" id="PTHR48479">
    <property type="entry name" value="NAD(P)H-QUINONE OXIDOREDUCTASE SUBUNIT 6, CHLOROPLASTIC"/>
    <property type="match status" value="1"/>
</dbReference>
<dbReference type="PANTHER" id="PTHR48479:SF1">
    <property type="entry name" value="NAD(P)H-QUINONE OXIDOREDUCTASE SUBUNIT 6, CHLOROPLASTIC"/>
    <property type="match status" value="1"/>
</dbReference>
<dbReference type="Pfam" id="PF00499">
    <property type="entry name" value="Oxidored_q3"/>
    <property type="match status" value="1"/>
</dbReference>
<gene>
    <name type="primary">ndhG</name>
    <name type="ordered locus">GuabCp074</name>
</gene>
<comment type="function">
    <text evidence="1">NDH shuttles electrons from NAD(P)H:plastoquinone, via FMN and iron-sulfur (Fe-S) centers, to quinones in the photosynthetic chain and possibly in a chloroplast respiratory chain. The immediate electron acceptor for the enzyme in this species is believed to be plastoquinone. Couples the redox reaction to proton translocation, and thus conserves the redox energy in a proton gradient (By similarity).</text>
</comment>
<comment type="catalytic activity">
    <reaction>
        <text>a plastoquinone + NADH + (n+1) H(+)(in) = a plastoquinol + NAD(+) + n H(+)(out)</text>
        <dbReference type="Rhea" id="RHEA:42608"/>
        <dbReference type="Rhea" id="RHEA-COMP:9561"/>
        <dbReference type="Rhea" id="RHEA-COMP:9562"/>
        <dbReference type="ChEBI" id="CHEBI:15378"/>
        <dbReference type="ChEBI" id="CHEBI:17757"/>
        <dbReference type="ChEBI" id="CHEBI:57540"/>
        <dbReference type="ChEBI" id="CHEBI:57945"/>
        <dbReference type="ChEBI" id="CHEBI:62192"/>
    </reaction>
</comment>
<comment type="catalytic activity">
    <reaction>
        <text>a plastoquinone + NADPH + (n+1) H(+)(in) = a plastoquinol + NADP(+) + n H(+)(out)</text>
        <dbReference type="Rhea" id="RHEA:42612"/>
        <dbReference type="Rhea" id="RHEA-COMP:9561"/>
        <dbReference type="Rhea" id="RHEA-COMP:9562"/>
        <dbReference type="ChEBI" id="CHEBI:15378"/>
        <dbReference type="ChEBI" id="CHEBI:17757"/>
        <dbReference type="ChEBI" id="CHEBI:57783"/>
        <dbReference type="ChEBI" id="CHEBI:58349"/>
        <dbReference type="ChEBI" id="CHEBI:62192"/>
    </reaction>
</comment>
<comment type="subunit">
    <text evidence="1">NDH is composed of at least 16 different subunits, 5 of which are encoded in the nucleus.</text>
</comment>
<comment type="subcellular location">
    <subcellularLocation>
        <location evidence="1">Plastid</location>
        <location evidence="1">Chloroplast thylakoid membrane</location>
        <topology evidence="1">Multi-pass membrane protein</topology>
    </subcellularLocation>
</comment>
<comment type="similarity">
    <text evidence="3">Belongs to the complex I subunit 6 family.</text>
</comment>
<evidence type="ECO:0000250" key="1"/>
<evidence type="ECO:0000255" key="2"/>
<evidence type="ECO:0000305" key="3"/>
<geneLocation type="chloroplast"/>
<reference key="1">
    <citation type="submission" date="2008-03" db="EMBL/GenBank/DDBJ databases">
        <title>Guizotia abyssinica chloroplast sequenced using Solexa.</title>
        <authorList>
            <person name="Kane N.C."/>
            <person name="Dempewolf H."/>
            <person name="Stewart M.L."/>
            <person name="Cronk Q."/>
            <person name="Rieseberrg L.H."/>
        </authorList>
    </citation>
    <scope>NUCLEOTIDE SEQUENCE [LARGE SCALE GENOMIC DNA]</scope>
    <source>
        <strain>cv. PI 508077</strain>
    </source>
</reference>
<keyword id="KW-0150">Chloroplast</keyword>
<keyword id="KW-0472">Membrane</keyword>
<keyword id="KW-0520">NAD</keyword>
<keyword id="KW-0521">NADP</keyword>
<keyword id="KW-0934">Plastid</keyword>
<keyword id="KW-0618">Plastoquinone</keyword>
<keyword id="KW-0874">Quinone</keyword>
<keyword id="KW-0793">Thylakoid</keyword>
<keyword id="KW-1278">Translocase</keyword>
<keyword id="KW-0812">Transmembrane</keyword>
<keyword id="KW-1133">Transmembrane helix</keyword>
<keyword id="KW-0813">Transport</keyword>
<name>NU6C_GUIAB</name>
<protein>
    <recommendedName>
        <fullName>NAD(P)H-quinone oxidoreductase subunit 6, chloroplastic</fullName>
        <ecNumber>7.1.1.-</ecNumber>
    </recommendedName>
    <alternativeName>
        <fullName>NAD(P)H dehydrogenase subunit 6</fullName>
    </alternativeName>
    <alternativeName>
        <fullName>NADH-plastoquinone oxidoreductase subunit 6</fullName>
    </alternativeName>
</protein>
<accession>B2LMP5</accession>
<feature type="chain" id="PRO_0000360256" description="NAD(P)H-quinone oxidoreductase subunit 6, chloroplastic">
    <location>
        <begin position="1"/>
        <end position="176"/>
    </location>
</feature>
<feature type="transmembrane region" description="Helical" evidence="2">
    <location>
        <begin position="10"/>
        <end position="30"/>
    </location>
</feature>
<feature type="transmembrane region" description="Helical" evidence="2">
    <location>
        <begin position="33"/>
        <end position="53"/>
    </location>
</feature>
<feature type="transmembrane region" description="Helical" evidence="2">
    <location>
        <begin position="61"/>
        <end position="81"/>
    </location>
</feature>
<feature type="transmembrane region" description="Helical" evidence="2">
    <location>
        <begin position="92"/>
        <end position="112"/>
    </location>
</feature>
<feature type="transmembrane region" description="Helical" evidence="2">
    <location>
        <begin position="152"/>
        <end position="172"/>
    </location>
</feature>
<proteinExistence type="inferred from homology"/>